<protein>
    <recommendedName>
        <fullName evidence="1">Ribonuclease HIII</fullName>
        <shortName evidence="1">RNase HIII</shortName>
        <ecNumber evidence="1">3.1.26.4</ecNumber>
    </recommendedName>
</protein>
<name>RNH3_LISMC</name>
<organism>
    <name type="scientific">Listeria monocytogenes serotype 4b (strain CLIP80459)</name>
    <dbReference type="NCBI Taxonomy" id="568819"/>
    <lineage>
        <taxon>Bacteria</taxon>
        <taxon>Bacillati</taxon>
        <taxon>Bacillota</taxon>
        <taxon>Bacilli</taxon>
        <taxon>Bacillales</taxon>
        <taxon>Listeriaceae</taxon>
        <taxon>Listeria</taxon>
    </lineage>
</organism>
<sequence>MANTVILVDQPTLEKMKQTYLPFSNPKLPPGAVFAAKKTGVSITGYKSRKVMFQGVNGEVEAKKWVATLPESKTKAPSVSKGILPANFASKNVIGSDEVGTGDFFGPITVCAAYVDAEMMPLLKELGVKDSKAMKDPEICRIAEKIMPLVPHSVLLCPNPKYNELQKRGMNQGQMKALLHNRAIENVLKKLAPVKPEAILIDQFAEKNTYYRYLAKEPSIIREDVFFATKAEGLHLSVAAASIIARYKFVQAFDAMSKEVGIPLPKGAGPHVDAVAAEIIERFGLETLAKYTKQHFANTEKALKMVKK</sequence>
<dbReference type="EC" id="3.1.26.4" evidence="1"/>
<dbReference type="EMBL" id="FM242711">
    <property type="protein sequence ID" value="CAS04999.1"/>
    <property type="molecule type" value="Genomic_DNA"/>
</dbReference>
<dbReference type="RefSeq" id="WP_012681263.1">
    <property type="nucleotide sequence ID" value="NC_012488.1"/>
</dbReference>
<dbReference type="SMR" id="C1L2D3"/>
<dbReference type="KEGG" id="lmc:Lm4b_01233"/>
<dbReference type="HOGENOM" id="CLU_059546_1_0_9"/>
<dbReference type="GO" id="GO:0005737">
    <property type="term" value="C:cytoplasm"/>
    <property type="evidence" value="ECO:0007669"/>
    <property type="project" value="UniProtKB-SubCell"/>
</dbReference>
<dbReference type="GO" id="GO:0032299">
    <property type="term" value="C:ribonuclease H2 complex"/>
    <property type="evidence" value="ECO:0007669"/>
    <property type="project" value="TreeGrafter"/>
</dbReference>
<dbReference type="GO" id="GO:0000287">
    <property type="term" value="F:magnesium ion binding"/>
    <property type="evidence" value="ECO:0007669"/>
    <property type="project" value="UniProtKB-UniRule"/>
</dbReference>
<dbReference type="GO" id="GO:0003723">
    <property type="term" value="F:RNA binding"/>
    <property type="evidence" value="ECO:0007669"/>
    <property type="project" value="InterPro"/>
</dbReference>
<dbReference type="GO" id="GO:0004523">
    <property type="term" value="F:RNA-DNA hybrid ribonuclease activity"/>
    <property type="evidence" value="ECO:0007669"/>
    <property type="project" value="UniProtKB-UniRule"/>
</dbReference>
<dbReference type="GO" id="GO:0043137">
    <property type="term" value="P:DNA replication, removal of RNA primer"/>
    <property type="evidence" value="ECO:0007669"/>
    <property type="project" value="TreeGrafter"/>
</dbReference>
<dbReference type="GO" id="GO:0006298">
    <property type="term" value="P:mismatch repair"/>
    <property type="evidence" value="ECO:0007669"/>
    <property type="project" value="TreeGrafter"/>
</dbReference>
<dbReference type="CDD" id="cd06590">
    <property type="entry name" value="RNase_HII_bacteria_HIII_like"/>
    <property type="match status" value="1"/>
</dbReference>
<dbReference type="CDD" id="cd14796">
    <property type="entry name" value="RNAse_HIII_N"/>
    <property type="match status" value="1"/>
</dbReference>
<dbReference type="FunFam" id="3.30.420.10:FF:000047">
    <property type="entry name" value="Ribonuclease HIII"/>
    <property type="match status" value="1"/>
</dbReference>
<dbReference type="Gene3D" id="3.30.420.10">
    <property type="entry name" value="Ribonuclease H-like superfamily/Ribonuclease H"/>
    <property type="match status" value="1"/>
</dbReference>
<dbReference type="Gene3D" id="3.30.310.10">
    <property type="entry name" value="TATA-Binding Protein"/>
    <property type="match status" value="1"/>
</dbReference>
<dbReference type="HAMAP" id="MF_00053">
    <property type="entry name" value="RNase_HIII"/>
    <property type="match status" value="1"/>
</dbReference>
<dbReference type="InterPro" id="IPR001352">
    <property type="entry name" value="RNase_HII/HIII"/>
</dbReference>
<dbReference type="InterPro" id="IPR024567">
    <property type="entry name" value="RNase_HII/HIII_dom"/>
</dbReference>
<dbReference type="InterPro" id="IPR004641">
    <property type="entry name" value="RNase_HIII"/>
</dbReference>
<dbReference type="InterPro" id="IPR024568">
    <property type="entry name" value="RNase_HIII_N"/>
</dbReference>
<dbReference type="InterPro" id="IPR012337">
    <property type="entry name" value="RNaseH-like_sf"/>
</dbReference>
<dbReference type="InterPro" id="IPR036397">
    <property type="entry name" value="RNaseH_sf"/>
</dbReference>
<dbReference type="InterPro" id="IPR012295">
    <property type="entry name" value="TBP_dom_sf"/>
</dbReference>
<dbReference type="NCBIfam" id="TIGR00716">
    <property type="entry name" value="rnhC"/>
    <property type="match status" value="1"/>
</dbReference>
<dbReference type="PANTHER" id="PTHR10954:SF23">
    <property type="entry name" value="RIBONUCLEASE"/>
    <property type="match status" value="1"/>
</dbReference>
<dbReference type="PANTHER" id="PTHR10954">
    <property type="entry name" value="RIBONUCLEASE H2 SUBUNIT A"/>
    <property type="match status" value="1"/>
</dbReference>
<dbReference type="Pfam" id="PF11858">
    <property type="entry name" value="DUF3378"/>
    <property type="match status" value="1"/>
</dbReference>
<dbReference type="Pfam" id="PF01351">
    <property type="entry name" value="RNase_HII"/>
    <property type="match status" value="1"/>
</dbReference>
<dbReference type="PIRSF" id="PIRSF037748">
    <property type="entry name" value="RnhC"/>
    <property type="match status" value="1"/>
</dbReference>
<dbReference type="SUPFAM" id="SSF53098">
    <property type="entry name" value="Ribonuclease H-like"/>
    <property type="match status" value="1"/>
</dbReference>
<dbReference type="PROSITE" id="PS51975">
    <property type="entry name" value="RNASE_H_2"/>
    <property type="match status" value="1"/>
</dbReference>
<evidence type="ECO:0000255" key="1">
    <source>
        <dbReference type="HAMAP-Rule" id="MF_00053"/>
    </source>
</evidence>
<evidence type="ECO:0000255" key="2">
    <source>
        <dbReference type="PROSITE-ProRule" id="PRU01319"/>
    </source>
</evidence>
<keyword id="KW-0963">Cytoplasm</keyword>
<keyword id="KW-0255">Endonuclease</keyword>
<keyword id="KW-0378">Hydrolase</keyword>
<keyword id="KW-0460">Magnesium</keyword>
<keyword id="KW-0479">Metal-binding</keyword>
<keyword id="KW-0540">Nuclease</keyword>
<feature type="chain" id="PRO_1000202295" description="Ribonuclease HIII">
    <location>
        <begin position="1"/>
        <end position="308"/>
    </location>
</feature>
<feature type="domain" description="RNase H type-2" evidence="2">
    <location>
        <begin position="91"/>
        <end position="308"/>
    </location>
</feature>
<feature type="binding site" evidence="1">
    <location>
        <position position="97"/>
    </location>
    <ligand>
        <name>a divalent metal cation</name>
        <dbReference type="ChEBI" id="CHEBI:60240"/>
    </ligand>
</feature>
<feature type="binding site" evidence="1">
    <location>
        <position position="98"/>
    </location>
    <ligand>
        <name>a divalent metal cation</name>
        <dbReference type="ChEBI" id="CHEBI:60240"/>
    </ligand>
</feature>
<feature type="binding site" evidence="1">
    <location>
        <position position="202"/>
    </location>
    <ligand>
        <name>a divalent metal cation</name>
        <dbReference type="ChEBI" id="CHEBI:60240"/>
    </ligand>
</feature>
<gene>
    <name evidence="1" type="primary">rnhC</name>
    <name type="ordered locus">Lm4b_01233</name>
</gene>
<comment type="function">
    <text evidence="1">Endonuclease that specifically degrades the RNA of RNA-DNA hybrids.</text>
</comment>
<comment type="catalytic activity">
    <reaction evidence="1">
        <text>Endonucleolytic cleavage to 5'-phosphomonoester.</text>
        <dbReference type="EC" id="3.1.26.4"/>
    </reaction>
</comment>
<comment type="cofactor">
    <cofactor evidence="1">
        <name>Mn(2+)</name>
        <dbReference type="ChEBI" id="CHEBI:29035"/>
    </cofactor>
    <cofactor evidence="1">
        <name>Mg(2+)</name>
        <dbReference type="ChEBI" id="CHEBI:18420"/>
    </cofactor>
    <text evidence="1">Manganese or magnesium. Binds 1 divalent metal ion per monomer in the absence of substrate. May bind a second metal ion after substrate binding.</text>
</comment>
<comment type="subcellular location">
    <subcellularLocation>
        <location evidence="1">Cytoplasm</location>
    </subcellularLocation>
</comment>
<comment type="similarity">
    <text evidence="1">Belongs to the RNase HII family. RnhC subfamily.</text>
</comment>
<accession>C1L2D3</accession>
<reference key="1">
    <citation type="journal article" date="2012" name="BMC Genomics">
        <title>Comparative genomics and transcriptomics of lineages I, II, and III strains of Listeria monocytogenes.</title>
        <authorList>
            <person name="Hain T."/>
            <person name="Ghai R."/>
            <person name="Billion A."/>
            <person name="Kuenne C.T."/>
            <person name="Steinweg C."/>
            <person name="Izar B."/>
            <person name="Mohamed W."/>
            <person name="Mraheil M."/>
            <person name="Domann E."/>
            <person name="Schaffrath S."/>
            <person name="Karst U."/>
            <person name="Goesmann A."/>
            <person name="Oehm S."/>
            <person name="Puhler A."/>
            <person name="Merkl R."/>
            <person name="Vorwerk S."/>
            <person name="Glaser P."/>
            <person name="Garrido P."/>
            <person name="Rusniok C."/>
            <person name="Buchrieser C."/>
            <person name="Goebel W."/>
            <person name="Chakraborty T."/>
        </authorList>
    </citation>
    <scope>NUCLEOTIDE SEQUENCE [LARGE SCALE GENOMIC DNA]</scope>
    <source>
        <strain>CLIP80459</strain>
    </source>
</reference>
<proteinExistence type="inferred from homology"/>